<name>COBL_MYCTO</name>
<protein>
    <recommendedName>
        <fullName>Precorrin-6Y C(5,15)-methyltransferase [decarboxylating]</fullName>
        <shortName>Precorrin-6 methyltransferase</shortName>
        <shortName>Precorrin-6Y methylase</shortName>
        <ecNumber>2.1.1.132</ecNumber>
    </recommendedName>
</protein>
<accession>P9WGA8</accession>
<accession>L0TA32</accession>
<accession>Q10671</accession>
<evidence type="ECO:0000250" key="1"/>
<evidence type="ECO:0000305" key="2"/>
<comment type="function">
    <text evidence="1">Catalyzes the methylation of both C-5 and C-15 in precorrin-6Y to form precorrin-8X.</text>
</comment>
<comment type="catalytic activity">
    <reaction>
        <text>precorrin-6B + 2 S-adenosyl-L-methionine = precorrin-8X + 2 S-adenosyl-L-homocysteine + CO2 + 3 H(+)</text>
        <dbReference type="Rhea" id="RHEA:17477"/>
        <dbReference type="ChEBI" id="CHEBI:15378"/>
        <dbReference type="ChEBI" id="CHEBI:16526"/>
        <dbReference type="ChEBI" id="CHEBI:57856"/>
        <dbReference type="ChEBI" id="CHEBI:58532"/>
        <dbReference type="ChEBI" id="CHEBI:58581"/>
        <dbReference type="ChEBI" id="CHEBI:59789"/>
        <dbReference type="EC" id="2.1.1.132"/>
    </reaction>
</comment>
<comment type="pathway">
    <text>Cofactor biosynthesis; adenosylcobalamin biosynthesis; cob(II)yrinate a,c-diamide from precorrin-2 (aerobic route): step 7/10.</text>
</comment>
<comment type="similarity">
    <text evidence="2">Belongs to the precorrin methyltransferase family.</text>
</comment>
<organism>
    <name type="scientific">Mycobacterium tuberculosis (strain CDC 1551 / Oshkosh)</name>
    <dbReference type="NCBI Taxonomy" id="83331"/>
    <lineage>
        <taxon>Bacteria</taxon>
        <taxon>Bacillati</taxon>
        <taxon>Actinomycetota</taxon>
        <taxon>Actinomycetes</taxon>
        <taxon>Mycobacteriales</taxon>
        <taxon>Mycobacteriaceae</taxon>
        <taxon>Mycobacterium</taxon>
        <taxon>Mycobacterium tuberculosis complex</taxon>
    </lineage>
</organism>
<proteinExistence type="inferred from homology"/>
<dbReference type="EC" id="2.1.1.132"/>
<dbReference type="EMBL" id="AE000516">
    <property type="protein sequence ID" value="AAK46412.1"/>
    <property type="molecule type" value="Genomic_DNA"/>
</dbReference>
<dbReference type="PIR" id="C70765">
    <property type="entry name" value="C70765"/>
</dbReference>
<dbReference type="RefSeq" id="WP_010924485.1">
    <property type="nucleotide sequence ID" value="NC_002755.2"/>
</dbReference>
<dbReference type="SMR" id="P9WGA8"/>
<dbReference type="KEGG" id="mtc:MT2132"/>
<dbReference type="HOGENOM" id="CLU_031955_0_0_11"/>
<dbReference type="UniPathway" id="UPA00148">
    <property type="reaction ID" value="UER00218"/>
</dbReference>
<dbReference type="Proteomes" id="UP000001020">
    <property type="component" value="Chromosome"/>
</dbReference>
<dbReference type="GO" id="GO:0046025">
    <property type="term" value="F:precorrin-6Y C5,15-methyltransferase (decarboxylating) activity"/>
    <property type="evidence" value="ECO:0007669"/>
    <property type="project" value="UniProtKB-EC"/>
</dbReference>
<dbReference type="GO" id="GO:0008276">
    <property type="term" value="F:protein methyltransferase activity"/>
    <property type="evidence" value="ECO:0007669"/>
    <property type="project" value="InterPro"/>
</dbReference>
<dbReference type="GO" id="GO:0009236">
    <property type="term" value="P:cobalamin biosynthetic process"/>
    <property type="evidence" value="ECO:0007669"/>
    <property type="project" value="UniProtKB-UniPathway"/>
</dbReference>
<dbReference type="GO" id="GO:0032259">
    <property type="term" value="P:methylation"/>
    <property type="evidence" value="ECO:0007669"/>
    <property type="project" value="UniProtKB-KW"/>
</dbReference>
<dbReference type="CDD" id="cd11644">
    <property type="entry name" value="Precorrin-6Y-MT"/>
    <property type="match status" value="1"/>
</dbReference>
<dbReference type="Gene3D" id="3.40.1010.10">
    <property type="entry name" value="Cobalt-precorrin-4 Transmethylase, Domain 1"/>
    <property type="match status" value="1"/>
</dbReference>
<dbReference type="Gene3D" id="3.40.50.150">
    <property type="entry name" value="Vaccinia Virus protein VP39"/>
    <property type="match status" value="1"/>
</dbReference>
<dbReference type="InterPro" id="IPR000878">
    <property type="entry name" value="4pyrrol_Mease"/>
</dbReference>
<dbReference type="InterPro" id="IPR035996">
    <property type="entry name" value="4pyrrol_Methylase_sf"/>
</dbReference>
<dbReference type="InterPro" id="IPR014777">
    <property type="entry name" value="4pyrrole_Mease_sub1"/>
</dbReference>
<dbReference type="InterPro" id="IPR012818">
    <property type="entry name" value="CbiE"/>
</dbReference>
<dbReference type="InterPro" id="IPR006365">
    <property type="entry name" value="Cbl_synth_CobL"/>
</dbReference>
<dbReference type="InterPro" id="IPR014008">
    <property type="entry name" value="Cbl_synth_MTase_CbiT"/>
</dbReference>
<dbReference type="InterPro" id="IPR050714">
    <property type="entry name" value="Cobalamin_biosynth_MTase"/>
</dbReference>
<dbReference type="InterPro" id="IPR029063">
    <property type="entry name" value="SAM-dependent_MTases_sf"/>
</dbReference>
<dbReference type="NCBIfam" id="TIGR02467">
    <property type="entry name" value="CbiE"/>
    <property type="match status" value="1"/>
</dbReference>
<dbReference type="NCBIfam" id="TIGR02469">
    <property type="entry name" value="CbiT"/>
    <property type="match status" value="1"/>
</dbReference>
<dbReference type="PANTHER" id="PTHR43182">
    <property type="entry name" value="COBALT-PRECORRIN-6B C(15)-METHYLTRANSFERASE (DECARBOXYLATING)"/>
    <property type="match status" value="1"/>
</dbReference>
<dbReference type="PANTHER" id="PTHR43182:SF1">
    <property type="entry name" value="COBALT-PRECORRIN-7 C(5)-METHYLTRANSFERASE"/>
    <property type="match status" value="1"/>
</dbReference>
<dbReference type="Pfam" id="PF00590">
    <property type="entry name" value="TP_methylase"/>
    <property type="match status" value="1"/>
</dbReference>
<dbReference type="PIRSF" id="PIRSF036428">
    <property type="entry name" value="CobL"/>
    <property type="match status" value="1"/>
</dbReference>
<dbReference type="SUPFAM" id="SSF53335">
    <property type="entry name" value="S-adenosyl-L-methionine-dependent methyltransferases"/>
    <property type="match status" value="1"/>
</dbReference>
<dbReference type="SUPFAM" id="SSF53790">
    <property type="entry name" value="Tetrapyrrole methylase"/>
    <property type="match status" value="1"/>
</dbReference>
<gene>
    <name type="primary">cobL</name>
    <name type="ordered locus">MT2132</name>
</gene>
<sequence>MIIVVGIGADGMTGLSEHSRSELRRATVIYGSKRQLALLDDTVTAERWEWPTPMLPAVQGLSPDGADLHVVASGDPLLHGIGSTLIRLFGHDNVTVLPHVSAVTLACARMGWNVYDTEVISLVTAQPHTAVRRGGRAIVLSGDRSTPQALAVLLTEHGRGDSKFSVLEQLGGPAERRRDGTARAWACDPPLDVDELNVIAVRYLPDERTSWAPDEAFAHDGQITKHPIRVLTLAALAPRPGQRLWDVGAGSGAIAVQWCRSWPGCTAVAFERDERRRRNIGFNAAAFGVSVDVRGDAPDAFDDAARPSVIFLGGGVTQPGLLEACLHSLPAGGNLVANAVTVESEAALAHAYSRLGGELRRFQHYLGEPLGGFTGWRPQLPVTQWSVTKR</sequence>
<feature type="chain" id="PRO_0000428394" description="Precorrin-6Y C(5,15)-methyltransferase [decarboxylating]">
    <location>
        <begin position="1"/>
        <end position="390"/>
    </location>
</feature>
<keyword id="KW-0169">Cobalamin biosynthesis</keyword>
<keyword id="KW-0489">Methyltransferase</keyword>
<keyword id="KW-1185">Reference proteome</keyword>
<keyword id="KW-0949">S-adenosyl-L-methionine</keyword>
<keyword id="KW-0808">Transferase</keyword>
<reference key="1">
    <citation type="journal article" date="2002" name="J. Bacteriol.">
        <title>Whole-genome comparison of Mycobacterium tuberculosis clinical and laboratory strains.</title>
        <authorList>
            <person name="Fleischmann R.D."/>
            <person name="Alland D."/>
            <person name="Eisen J.A."/>
            <person name="Carpenter L."/>
            <person name="White O."/>
            <person name="Peterson J.D."/>
            <person name="DeBoy R.T."/>
            <person name="Dodson R.J."/>
            <person name="Gwinn M.L."/>
            <person name="Haft D.H."/>
            <person name="Hickey E.K."/>
            <person name="Kolonay J.F."/>
            <person name="Nelson W.C."/>
            <person name="Umayam L.A."/>
            <person name="Ermolaeva M.D."/>
            <person name="Salzberg S.L."/>
            <person name="Delcher A."/>
            <person name="Utterback T.R."/>
            <person name="Weidman J.F."/>
            <person name="Khouri H.M."/>
            <person name="Gill J."/>
            <person name="Mikula A."/>
            <person name="Bishai W."/>
            <person name="Jacobs W.R. Jr."/>
            <person name="Venter J.C."/>
            <person name="Fraser C.M."/>
        </authorList>
    </citation>
    <scope>NUCLEOTIDE SEQUENCE [LARGE SCALE GENOMIC DNA]</scope>
    <source>
        <strain>CDC 1551 / Oshkosh</strain>
    </source>
</reference>